<accession>D4GZE7</accession>
<protein>
    <recommendedName>
        <fullName>Small archaeal modifier protein 2</fullName>
        <shortName>SAMP2</shortName>
    </recommendedName>
    <alternativeName>
        <fullName>Ubiquitin-like small archaeal modifier protein 2</fullName>
    </alternativeName>
</protein>
<gene>
    <name type="primary">samp2</name>
    <name type="ordered locus">HVO_0202</name>
</gene>
<dbReference type="EMBL" id="CP001956">
    <property type="protein sequence ID" value="ADE03392.1"/>
    <property type="molecule type" value="Genomic_DNA"/>
</dbReference>
<dbReference type="RefSeq" id="WP_004045316.1">
    <property type="nucleotide sequence ID" value="NC_013967.1"/>
</dbReference>
<dbReference type="PDB" id="2L32">
    <property type="method" value="NMR"/>
    <property type="chains" value="A=1-66"/>
</dbReference>
<dbReference type="PDB" id="2LJI">
    <property type="method" value="NMR"/>
    <property type="chains" value="A=1-66"/>
</dbReference>
<dbReference type="PDB" id="4HRS">
    <property type="method" value="X-ray"/>
    <property type="resolution" value="2.30 A"/>
    <property type="chains" value="A=2-66"/>
</dbReference>
<dbReference type="PDBsum" id="2L32"/>
<dbReference type="PDBsum" id="2LJI"/>
<dbReference type="PDBsum" id="4HRS"/>
<dbReference type="BMRB" id="D4GZE7"/>
<dbReference type="SMR" id="D4GZE7"/>
<dbReference type="STRING" id="309800.HVO_0202"/>
<dbReference type="PaxDb" id="309800-C498_19264"/>
<dbReference type="EnsemblBacteria" id="ADE03392">
    <property type="protein sequence ID" value="ADE03392"/>
    <property type="gene ID" value="HVO_0202"/>
</dbReference>
<dbReference type="GeneID" id="8926718"/>
<dbReference type="KEGG" id="hvo:HVO_0202"/>
<dbReference type="eggNOG" id="arCOG00535">
    <property type="taxonomic scope" value="Archaea"/>
</dbReference>
<dbReference type="HOGENOM" id="CLU_114601_9_3_2"/>
<dbReference type="OrthoDB" id="104640at2157"/>
<dbReference type="EvolutionaryTrace" id="D4GZE7"/>
<dbReference type="Proteomes" id="UP000008243">
    <property type="component" value="Chromosome"/>
</dbReference>
<dbReference type="GO" id="GO:0000166">
    <property type="term" value="F:nucleotide binding"/>
    <property type="evidence" value="ECO:0007669"/>
    <property type="project" value="UniProtKB-KW"/>
</dbReference>
<dbReference type="GO" id="GO:0031386">
    <property type="term" value="F:protein tag activity"/>
    <property type="evidence" value="ECO:0000314"/>
    <property type="project" value="UniProtKB"/>
</dbReference>
<dbReference type="GO" id="GO:0032446">
    <property type="term" value="P:protein modification by small protein conjugation"/>
    <property type="evidence" value="ECO:0000314"/>
    <property type="project" value="UniProtKB"/>
</dbReference>
<dbReference type="FunFam" id="4.10.410.50:FF:000001">
    <property type="entry name" value="Small archaeal modifier protein 2"/>
    <property type="match status" value="1"/>
</dbReference>
<dbReference type="Gene3D" id="4.10.410.50">
    <property type="match status" value="1"/>
</dbReference>
<dbReference type="InterPro" id="IPR016155">
    <property type="entry name" value="Mopterin_synth/thiamin_S_b"/>
</dbReference>
<dbReference type="InterPro" id="IPR053752">
    <property type="entry name" value="SAM_domain_containing"/>
</dbReference>
<dbReference type="InterPro" id="IPR053833">
    <property type="entry name" value="SAMP2"/>
</dbReference>
<dbReference type="InterPro" id="IPR053834">
    <property type="entry name" value="SAMP2_halobacteria"/>
</dbReference>
<dbReference type="NCBIfam" id="NF041919">
    <property type="entry name" value="SAMP2"/>
    <property type="match status" value="1"/>
</dbReference>
<dbReference type="Pfam" id="PF21965">
    <property type="entry name" value="SAMP2"/>
    <property type="match status" value="1"/>
</dbReference>
<dbReference type="SUPFAM" id="SSF54285">
    <property type="entry name" value="MoaD/ThiS"/>
    <property type="match status" value="1"/>
</dbReference>
<comment type="function">
    <text evidence="1 2 4">Functions as a protein modifier covalently attached to lysine residues of substrate proteins, as well as a sulfur carrier in tRNA thiolation. The protein modification process is termed sampylation and involves the formation of an isopeptide bond between the SAMP2 C-terminal glycine carboxylate and the epsilon-amino group of lysine residues on target proteins. Is able to form polymeric chains with itself at Lys-58, similar to ubiquitin and other ubiquitin-like proteins. May serve as a proteolytic signal in the cell to target proteins for degradation by proteasomes.</text>
</comment>
<comment type="subunit">
    <text evidence="3 5">Monomer (PubMed:23821306). Monomeric and polymeric forms interact with NcsA (PubMed:24906001).</text>
</comment>
<comment type="PTM">
    <text evidence="2">The C-terminal glycine is likely acyl-adenylated (-COAMP) by UbaA, and also probably thiocarboxylated (-COSH) to function in sulfur transfer.</text>
</comment>
<comment type="disruption phenotype">
    <text evidence="2">Cells lacking this gene grow similarly to wild-type in the presence of either DMSO or oxygen as the terminal electron acceptor, but are retarded in aerobic growth at 50 degrees Celsius. The lysine tRNAs of the mutant strain appear to be nonthiolated.</text>
</comment>
<organism>
    <name type="scientific">Haloferax volcanii (strain ATCC 29605 / DSM 3757 / JCM 8879 / NBRC 14742 / NCIMB 2012 / VKM B-1768 / DS2)</name>
    <name type="common">Halobacterium volcanii</name>
    <dbReference type="NCBI Taxonomy" id="309800"/>
    <lineage>
        <taxon>Archaea</taxon>
        <taxon>Methanobacteriati</taxon>
        <taxon>Methanobacteriota</taxon>
        <taxon>Stenosarchaea group</taxon>
        <taxon>Halobacteria</taxon>
        <taxon>Halobacteriales</taxon>
        <taxon>Haloferacaceae</taxon>
        <taxon>Haloferax</taxon>
    </lineage>
</organism>
<proteinExistence type="evidence at protein level"/>
<feature type="chain" id="PRO_0000397102" description="Small archaeal modifier protein 2">
    <location>
        <begin position="1"/>
        <end position="66"/>
    </location>
</feature>
<feature type="modified residue" description="1-thioglycine; alternate" evidence="2">
    <location>
        <position position="66"/>
    </location>
</feature>
<feature type="modified residue" description="Glycyl adenylate; alternate" evidence="2">
    <location>
        <position position="66"/>
    </location>
</feature>
<feature type="cross-link" description="Glycyl lysine isopeptide (Lys-Gly) (interchain with G-Cter in SAMP2)">
    <location>
        <position position="58"/>
    </location>
</feature>
<feature type="cross-link" description="Glycyl lysine isopeptide (Gly-Lys) (interchain with K-? in acceptor proteins); alternate">
    <location>
        <position position="66"/>
    </location>
</feature>
<feature type="mutagenesis site" description="Abolishes SAMPylation of substrate proteins." evidence="3">
    <original>E</original>
    <variation>G</variation>
    <location>
        <position position="53"/>
    </location>
</feature>
<feature type="mutagenesis site" description="Loss of isopeptide linkage of polymeric chains on NcsA; when associated with R-64." evidence="5">
    <original>K</original>
    <variation>R</variation>
    <location>
        <position position="58"/>
    </location>
</feature>
<feature type="mutagenesis site" description="Loss of isopeptide linkage of polymeric chains on NcsA; when associated with R-58." evidence="5">
    <original>K</original>
    <variation>R</variation>
    <location>
        <position position="64"/>
    </location>
</feature>
<feature type="mutagenesis site" description="Abolishes SAMPylation of substrate proteins." evidence="1">
    <location>
        <begin position="65"/>
        <end position="66"/>
    </location>
</feature>
<feature type="strand" evidence="9">
    <location>
        <begin position="2"/>
        <end position="6"/>
    </location>
</feature>
<feature type="strand" evidence="9">
    <location>
        <begin position="12"/>
        <end position="16"/>
    </location>
</feature>
<feature type="helix" evidence="9">
    <location>
        <begin position="23"/>
        <end position="29"/>
    </location>
</feature>
<feature type="helix" evidence="9">
    <location>
        <begin position="34"/>
        <end position="36"/>
    </location>
</feature>
<feature type="strand" evidence="9">
    <location>
        <begin position="39"/>
        <end position="41"/>
    </location>
</feature>
<feature type="strand" evidence="9">
    <location>
        <begin position="44"/>
        <end position="46"/>
    </location>
</feature>
<feature type="helix" evidence="8">
    <location>
        <begin position="47"/>
        <end position="49"/>
    </location>
</feature>
<feature type="strand" evidence="9">
    <location>
        <begin position="50"/>
        <end position="53"/>
    </location>
</feature>
<feature type="strand" evidence="7">
    <location>
        <begin position="57"/>
        <end position="59"/>
    </location>
</feature>
<reference key="1">
    <citation type="journal article" date="2010" name="PLoS ONE">
        <title>The complete genome sequence of Haloferax volcanii DS2, a model archaeon.</title>
        <authorList>
            <person name="Hartman A.L."/>
            <person name="Norais C."/>
            <person name="Badger J.H."/>
            <person name="Delmas S."/>
            <person name="Haldenby S."/>
            <person name="Madupu R."/>
            <person name="Robinson J."/>
            <person name="Khouri H."/>
            <person name="Ren Q."/>
            <person name="Lowe T.M."/>
            <person name="Maupin-Furlow J."/>
            <person name="Pohlschroder M."/>
            <person name="Daniels C."/>
            <person name="Pfeiffer F."/>
            <person name="Allers T."/>
            <person name="Eisen J.A."/>
        </authorList>
    </citation>
    <scope>NUCLEOTIDE SEQUENCE [LARGE SCALE GENOMIC DNA]</scope>
    <source>
        <strain>ATCC 29605 / DSM 3757 / JCM 8879 / NBRC 14742 / NCIMB 2012 / VKM B-1768 / DS2</strain>
    </source>
</reference>
<reference key="2">
    <citation type="journal article" date="2010" name="Nature">
        <title>Ubiquitin-like small archaeal modifier proteins (SAMPs) in Haloferax volcanii.</title>
        <authorList>
            <person name="Humbard M.A."/>
            <person name="Miranda H.V."/>
            <person name="Lim J.M."/>
            <person name="Krause D.J."/>
            <person name="Pritz J.R."/>
            <person name="Zhou G."/>
            <person name="Chen S."/>
            <person name="Wells L."/>
            <person name="Maupin-Furlow J.A."/>
        </authorList>
    </citation>
    <scope>FUNCTION AS A PROTEIN MODIFIER</scope>
    <scope>CROSS-LINK</scope>
    <scope>PROTEIN TARGETS</scope>
    <scope>SAMPYLATION AT LYS-58</scope>
    <scope>IDENTIFICATION BY MASS SPECTROMETRY</scope>
    <scope>MUTAGENESIS OF 65-GLY-GLY-66</scope>
    <source>
        <strain>ATCC 29605 / DSM 3757 / JCM 8879 / NBRC 14742 / NCIMB 2012 / VKM B-1768 / DS2</strain>
    </source>
</reference>
<reference key="3">
    <citation type="journal article" date="2010" name="Trends Biochem. Sci.">
        <title>SAMPyling proteins in archaea.</title>
        <authorList>
            <person name="Darwin K.H."/>
            <person name="Hofmann K."/>
        </authorList>
    </citation>
    <scope>REVIEW</scope>
</reference>
<reference key="4">
    <citation type="journal article" date="2011" name="Proc. Natl. Acad. Sci. U.S.A.">
        <title>E1- and ubiquitin-like proteins provide a direct link between protein conjugation and sulfur transfer in archaea.</title>
        <authorList>
            <person name="Miranda H.V."/>
            <person name="Nembhard N."/>
            <person name="Su D."/>
            <person name="Hepowit N."/>
            <person name="Krause D.J."/>
            <person name="Pritz J.R."/>
            <person name="Phillips C."/>
            <person name="Soll D."/>
            <person name="Maupin-Furlow J.A."/>
        </authorList>
    </citation>
    <scope>FUNCTION</scope>
    <scope>THIOCARBOXYLATION AT GLY-66</scope>
    <scope>AMPYLATION AT GLY-66</scope>
    <scope>DISRUPTION PHENOTYPE</scope>
    <source>
        <strain>DS2 / DS70</strain>
    </source>
</reference>
<reference key="5">
    <citation type="journal article" date="2014" name="Mol. Cell. Proteomics">
        <title>Archaeal ubiquitin-like SAMP3 is isopeptide-linked to proteins via a UbaA-dependent mechanism.</title>
        <authorList>
            <person name="Miranda H.V."/>
            <person name="Antelmann H."/>
            <person name="Hepowit N."/>
            <person name="Chavarria N.E."/>
            <person name="Krause D.J."/>
            <person name="Pritz J.R."/>
            <person name="Basell K."/>
            <person name="Becher D."/>
            <person name="Humbard M.A."/>
            <person name="Brocchieri L."/>
            <person name="Maupin-Furlow J.A."/>
        </authorList>
    </citation>
    <scope>FUNCTION</scope>
    <source>
        <strain>DS2 / DS70</strain>
    </source>
</reference>
<reference key="6">
    <citation type="journal article" date="2014" name="PLoS ONE">
        <title>Archaeal Tuc1/Ncs6 homolog required for wobble uridine tRNA thiolation is associated with ubiquitin-proteasome, translation, and RNA processing system homologs.</title>
        <authorList>
            <person name="Chavarria N.E."/>
            <person name="Hwang S."/>
            <person name="Cao S."/>
            <person name="Fu X."/>
            <person name="Holman M."/>
            <person name="Elbanna D."/>
            <person name="Rodriguez S."/>
            <person name="Arrington D."/>
            <person name="Englert M."/>
            <person name="Uthandi S."/>
            <person name="Soell D."/>
            <person name="Maupin-Furlow J.A."/>
        </authorList>
    </citation>
    <scope>INTERACTION WITH NCSA</scope>
    <scope>MUTAGENESIS OF LYS-58 AND LYS-64</scope>
    <source>
        <strain evidence="6">DS2 / DS70</strain>
    </source>
</reference>
<reference key="7">
    <citation type="submission" date="2010-09" db="PDB data bank">
        <title>Solution structure of ubiquitin-like small archaeal modifier protein in Haloferax volcanii.</title>
        <authorList>
            <person name="Fan S."/>
            <person name="Zhang W."/>
            <person name="Liao S."/>
            <person name="Tu X."/>
        </authorList>
    </citation>
    <scope>STRUCTURE BY NMR</scope>
</reference>
<reference key="8">
    <citation type="submission" date="2011-09" db="PDB data bank">
        <title>Structure of a protein from Haloferax volcanii.</title>
        <authorList>
            <person name="Liao S."/>
            <person name="Zhang W."/>
            <person name="Fan K."/>
            <person name="Tu X."/>
        </authorList>
    </citation>
    <scope>STRUCTURE BY NMR</scope>
</reference>
<reference key="9">
    <citation type="journal article" date="2013" name="Protein Sci.">
        <title>Crystal structure of the ubiquitin-like small archaeal modifier protein 2 from Haloferax volcanii.</title>
        <authorList>
            <person name="Li Y."/>
            <person name="Maciejewski M.W."/>
            <person name="Martin J."/>
            <person name="Jin K."/>
            <person name="Zhang Y."/>
            <person name="Maupin-Furlow J.A."/>
            <person name="Hao B."/>
        </authorList>
    </citation>
    <scope>X-RAY CRYSTALLOGRAPHY (2.30 ANGSTROMS)</scope>
    <scope>SUBUNIT</scope>
    <scope>MUTAGENESIS OF GLU-53</scope>
    <source>
        <strain>ATCC 29605 / DSM 3757 / JCM 8879 / NBRC 14742 / NCIMB 2012 / VKM B-1768 / DS2</strain>
    </source>
</reference>
<name>SAMP2_HALVD</name>
<evidence type="ECO:0000269" key="1">
    <source>
    </source>
</evidence>
<evidence type="ECO:0000269" key="2">
    <source>
    </source>
</evidence>
<evidence type="ECO:0000269" key="3">
    <source>
    </source>
</evidence>
<evidence type="ECO:0000269" key="4">
    <source>
    </source>
</evidence>
<evidence type="ECO:0000269" key="5">
    <source>
    </source>
</evidence>
<evidence type="ECO:0000303" key="6">
    <source>
    </source>
</evidence>
<evidence type="ECO:0007829" key="7">
    <source>
        <dbReference type="PDB" id="2L32"/>
    </source>
</evidence>
<evidence type="ECO:0007829" key="8">
    <source>
        <dbReference type="PDB" id="2LJI"/>
    </source>
</evidence>
<evidence type="ECO:0007829" key="9">
    <source>
        <dbReference type="PDB" id="4HRS"/>
    </source>
</evidence>
<sequence length="66" mass="7118">MNVTVEVVGEETSEVAVDDDGTYADLVRAVDLSPHEVTVLVDGRPVPEDQSVEVDRVKVLRLIKGG</sequence>
<keyword id="KW-0002">3D-structure</keyword>
<keyword id="KW-1017">Isopeptide bond</keyword>
<keyword id="KW-0547">Nucleotide-binding</keyword>
<keyword id="KW-0597">Phosphoprotein</keyword>
<keyword id="KW-1185">Reference proteome</keyword>
<keyword id="KW-0832">Ubl conjugation</keyword>
<keyword id="KW-0833">Ubl conjugation pathway</keyword>